<accession>Q9ZEC1</accession>
<name>ATP6_RICPR</name>
<evidence type="ECO:0000255" key="1">
    <source>
        <dbReference type="HAMAP-Rule" id="MF_01393"/>
    </source>
</evidence>
<gene>
    <name evidence="1" type="primary">atpB</name>
    <name type="ordered locus">RP023</name>
</gene>
<dbReference type="EMBL" id="AJ235270">
    <property type="protein sequence ID" value="CAA14494.1"/>
    <property type="molecule type" value="Genomic_DNA"/>
</dbReference>
<dbReference type="PIR" id="G71709">
    <property type="entry name" value="G71709"/>
</dbReference>
<dbReference type="RefSeq" id="NP_220417.1">
    <property type="nucleotide sequence ID" value="NC_000963.1"/>
</dbReference>
<dbReference type="RefSeq" id="WP_004596667.1">
    <property type="nucleotide sequence ID" value="NC_000963.1"/>
</dbReference>
<dbReference type="SMR" id="Q9ZEC1"/>
<dbReference type="STRING" id="272947.gene:17555106"/>
<dbReference type="EnsemblBacteria" id="CAA14494">
    <property type="protein sequence ID" value="CAA14494"/>
    <property type="gene ID" value="CAA14494"/>
</dbReference>
<dbReference type="KEGG" id="rpr:RP023"/>
<dbReference type="PATRIC" id="fig|272947.5.peg.23"/>
<dbReference type="eggNOG" id="COG0356">
    <property type="taxonomic scope" value="Bacteria"/>
</dbReference>
<dbReference type="HOGENOM" id="CLU_041018_0_2_5"/>
<dbReference type="OrthoDB" id="9809130at2"/>
<dbReference type="Proteomes" id="UP000002480">
    <property type="component" value="Chromosome"/>
</dbReference>
<dbReference type="GO" id="GO:0005886">
    <property type="term" value="C:plasma membrane"/>
    <property type="evidence" value="ECO:0007669"/>
    <property type="project" value="UniProtKB-SubCell"/>
</dbReference>
<dbReference type="GO" id="GO:0045259">
    <property type="term" value="C:proton-transporting ATP synthase complex"/>
    <property type="evidence" value="ECO:0007669"/>
    <property type="project" value="UniProtKB-KW"/>
</dbReference>
<dbReference type="GO" id="GO:0046933">
    <property type="term" value="F:proton-transporting ATP synthase activity, rotational mechanism"/>
    <property type="evidence" value="ECO:0007669"/>
    <property type="project" value="UniProtKB-UniRule"/>
</dbReference>
<dbReference type="CDD" id="cd00310">
    <property type="entry name" value="ATP-synt_Fo_a_6"/>
    <property type="match status" value="1"/>
</dbReference>
<dbReference type="FunFam" id="1.20.120.220:FF:000003">
    <property type="entry name" value="ATP synthase subunit a"/>
    <property type="match status" value="1"/>
</dbReference>
<dbReference type="Gene3D" id="1.20.120.220">
    <property type="entry name" value="ATP synthase, F0 complex, subunit A"/>
    <property type="match status" value="1"/>
</dbReference>
<dbReference type="HAMAP" id="MF_01393">
    <property type="entry name" value="ATP_synth_a_bact"/>
    <property type="match status" value="1"/>
</dbReference>
<dbReference type="InterPro" id="IPR000568">
    <property type="entry name" value="ATP_synth_F0_asu"/>
</dbReference>
<dbReference type="InterPro" id="IPR023011">
    <property type="entry name" value="ATP_synth_F0_asu_AS"/>
</dbReference>
<dbReference type="InterPro" id="IPR045083">
    <property type="entry name" value="ATP_synth_F0_asu_bact/mt"/>
</dbReference>
<dbReference type="InterPro" id="IPR035908">
    <property type="entry name" value="F0_ATP_A_sf"/>
</dbReference>
<dbReference type="NCBIfam" id="TIGR01131">
    <property type="entry name" value="ATP_synt_6_or_A"/>
    <property type="match status" value="1"/>
</dbReference>
<dbReference type="NCBIfam" id="NF004482">
    <property type="entry name" value="PRK05815.2-4"/>
    <property type="match status" value="1"/>
</dbReference>
<dbReference type="PANTHER" id="PTHR11410">
    <property type="entry name" value="ATP SYNTHASE SUBUNIT A"/>
    <property type="match status" value="1"/>
</dbReference>
<dbReference type="PANTHER" id="PTHR11410:SF0">
    <property type="entry name" value="ATP SYNTHASE SUBUNIT A"/>
    <property type="match status" value="1"/>
</dbReference>
<dbReference type="Pfam" id="PF00119">
    <property type="entry name" value="ATP-synt_A"/>
    <property type="match status" value="1"/>
</dbReference>
<dbReference type="PRINTS" id="PR00123">
    <property type="entry name" value="ATPASEA"/>
</dbReference>
<dbReference type="SUPFAM" id="SSF81336">
    <property type="entry name" value="F1F0 ATP synthase subunit A"/>
    <property type="match status" value="1"/>
</dbReference>
<dbReference type="PROSITE" id="PS00449">
    <property type="entry name" value="ATPASE_A"/>
    <property type="match status" value="1"/>
</dbReference>
<protein>
    <recommendedName>
        <fullName evidence="1">ATP synthase subunit a</fullName>
    </recommendedName>
    <alternativeName>
        <fullName evidence="1">ATP synthase F0 sector subunit a</fullName>
    </alternativeName>
    <alternativeName>
        <fullName evidence="1">F-ATPase subunit 6</fullName>
    </alternativeName>
</protein>
<sequence length="242" mass="27378">MTHSPLIQFNIKKLIDIKMFGFDVSFTNSSIYMLLATTLSLTYLYLAFYNRKLIPSRLQVSAEIVYNLVADMLNQNIGIKGRKFIPLVFSLFIFILFCNLLGMTPYSFTATSHIIVTFTLALLIFLTVTIVGFIKHGVSFLTLFLPHGTPVWLAPLMIVIELFTYLARPVSLSLRLAANMMAGHVLLKVIASFTVSLMIYLKFLPIPLMVILIGFEIFIAILQAYIFTILSCMYLNDAINLH</sequence>
<comment type="function">
    <text evidence="1">Key component of the proton channel; it plays a direct role in the translocation of protons across the membrane.</text>
</comment>
<comment type="subunit">
    <text evidence="1">F-type ATPases have 2 components, CF(1) - the catalytic core - and CF(0) - the membrane proton channel. CF(1) has five subunits: alpha(3), beta(3), gamma(1), delta(1), epsilon(1). CF(0) has three main subunits: a(1), b(2) and c(9-12). The alpha and beta chains form an alternating ring which encloses part of the gamma chain. CF(1) is attached to CF(0) by a central stalk formed by the gamma and epsilon chains, while a peripheral stalk is formed by the delta and b chains.</text>
</comment>
<comment type="subcellular location">
    <subcellularLocation>
        <location evidence="1">Cell inner membrane</location>
        <topology evidence="1">Multi-pass membrane protein</topology>
    </subcellularLocation>
</comment>
<comment type="similarity">
    <text evidence="1">Belongs to the ATPase A chain family.</text>
</comment>
<reference key="1">
    <citation type="journal article" date="1998" name="Nature">
        <title>The genome sequence of Rickettsia prowazekii and the origin of mitochondria.</title>
        <authorList>
            <person name="Andersson S.G.E."/>
            <person name="Zomorodipour A."/>
            <person name="Andersson J.O."/>
            <person name="Sicheritz-Ponten T."/>
            <person name="Alsmark U.C.M."/>
            <person name="Podowski R.M."/>
            <person name="Naeslund A.K."/>
            <person name="Eriksson A.-S."/>
            <person name="Winkler H.H."/>
            <person name="Kurland C.G."/>
        </authorList>
    </citation>
    <scope>NUCLEOTIDE SEQUENCE [LARGE SCALE GENOMIC DNA]</scope>
    <source>
        <strain>Madrid E</strain>
    </source>
</reference>
<keyword id="KW-0066">ATP synthesis</keyword>
<keyword id="KW-0997">Cell inner membrane</keyword>
<keyword id="KW-1003">Cell membrane</keyword>
<keyword id="KW-0138">CF(0)</keyword>
<keyword id="KW-0375">Hydrogen ion transport</keyword>
<keyword id="KW-0406">Ion transport</keyword>
<keyword id="KW-0472">Membrane</keyword>
<keyword id="KW-1185">Reference proteome</keyword>
<keyword id="KW-0812">Transmembrane</keyword>
<keyword id="KW-1133">Transmembrane helix</keyword>
<keyword id="KW-0813">Transport</keyword>
<organism>
    <name type="scientific">Rickettsia prowazekii (strain Madrid E)</name>
    <dbReference type="NCBI Taxonomy" id="272947"/>
    <lineage>
        <taxon>Bacteria</taxon>
        <taxon>Pseudomonadati</taxon>
        <taxon>Pseudomonadota</taxon>
        <taxon>Alphaproteobacteria</taxon>
        <taxon>Rickettsiales</taxon>
        <taxon>Rickettsiaceae</taxon>
        <taxon>Rickettsieae</taxon>
        <taxon>Rickettsia</taxon>
        <taxon>typhus group</taxon>
    </lineage>
</organism>
<proteinExistence type="inferred from homology"/>
<feature type="chain" id="PRO_0000082069" description="ATP synthase subunit a">
    <location>
        <begin position="1"/>
        <end position="242"/>
    </location>
</feature>
<feature type="transmembrane region" description="Helical" evidence="1">
    <location>
        <begin position="29"/>
        <end position="49"/>
    </location>
</feature>
<feature type="transmembrane region" description="Helical" evidence="1">
    <location>
        <begin position="84"/>
        <end position="104"/>
    </location>
</feature>
<feature type="transmembrane region" description="Helical" evidence="1">
    <location>
        <begin position="114"/>
        <end position="134"/>
    </location>
</feature>
<feature type="transmembrane region" description="Helical" evidence="1">
    <location>
        <begin position="140"/>
        <end position="160"/>
    </location>
</feature>
<feature type="transmembrane region" description="Helical" evidence="1">
    <location>
        <begin position="189"/>
        <end position="209"/>
    </location>
</feature>
<feature type="transmembrane region" description="Helical" evidence="1">
    <location>
        <begin position="210"/>
        <end position="230"/>
    </location>
</feature>